<sequence length="235" mass="25038">MRSRKSLPPLPPEQACLPWHPPGLVAGVDEAGRGPLAGPVVAAAVILDDLNPIEGLNDSKKLTAARREALYDEIRAKALCCSIAEASVEEIDRLNILQATLLAMRRAVLGLRLKPVLVLVDGNQLPVLDVQAEAIVKGDSLVQAISAASILAKVTRDRWCERLHEQYPEYGFDGHKGYGTAAHLAALRLHGACEEHRRTFAPVAHVVSIARMAEPLAAARVAAAAQGAQALLLSA</sequence>
<proteinExistence type="inferred from homology"/>
<feature type="chain" id="PRO_1000091619" description="Ribonuclease HII">
    <location>
        <begin position="1"/>
        <end position="235"/>
    </location>
</feature>
<feature type="domain" description="RNase H type-2" evidence="2">
    <location>
        <begin position="23"/>
        <end position="212"/>
    </location>
</feature>
<feature type="binding site" evidence="1">
    <location>
        <position position="29"/>
    </location>
    <ligand>
        <name>a divalent metal cation</name>
        <dbReference type="ChEBI" id="CHEBI:60240"/>
    </ligand>
</feature>
<feature type="binding site" evidence="1">
    <location>
        <position position="30"/>
    </location>
    <ligand>
        <name>a divalent metal cation</name>
        <dbReference type="ChEBI" id="CHEBI:60240"/>
    </ligand>
</feature>
<feature type="binding site" evidence="1">
    <location>
        <position position="121"/>
    </location>
    <ligand>
        <name>a divalent metal cation</name>
        <dbReference type="ChEBI" id="CHEBI:60240"/>
    </ligand>
</feature>
<organism>
    <name type="scientific">Delftia acidovorans (strain DSM 14801 / SPH-1)</name>
    <dbReference type="NCBI Taxonomy" id="398578"/>
    <lineage>
        <taxon>Bacteria</taxon>
        <taxon>Pseudomonadati</taxon>
        <taxon>Pseudomonadota</taxon>
        <taxon>Betaproteobacteria</taxon>
        <taxon>Burkholderiales</taxon>
        <taxon>Comamonadaceae</taxon>
        <taxon>Delftia</taxon>
    </lineage>
</organism>
<evidence type="ECO:0000255" key="1">
    <source>
        <dbReference type="HAMAP-Rule" id="MF_00052"/>
    </source>
</evidence>
<evidence type="ECO:0000255" key="2">
    <source>
        <dbReference type="PROSITE-ProRule" id="PRU01319"/>
    </source>
</evidence>
<keyword id="KW-0963">Cytoplasm</keyword>
<keyword id="KW-0255">Endonuclease</keyword>
<keyword id="KW-0378">Hydrolase</keyword>
<keyword id="KW-0464">Manganese</keyword>
<keyword id="KW-0479">Metal-binding</keyword>
<keyword id="KW-0540">Nuclease</keyword>
<keyword id="KW-1185">Reference proteome</keyword>
<protein>
    <recommendedName>
        <fullName evidence="1">Ribonuclease HII</fullName>
        <shortName evidence="1">RNase HII</shortName>
        <ecNumber evidence="1">3.1.26.4</ecNumber>
    </recommendedName>
</protein>
<dbReference type="EC" id="3.1.26.4" evidence="1"/>
<dbReference type="EMBL" id="CP000884">
    <property type="protein sequence ID" value="ABX37563.1"/>
    <property type="molecule type" value="Genomic_DNA"/>
</dbReference>
<dbReference type="RefSeq" id="WP_012206733.1">
    <property type="nucleotide sequence ID" value="NC_010002.1"/>
</dbReference>
<dbReference type="SMR" id="A9BML8"/>
<dbReference type="STRING" id="398578.Daci_4934"/>
<dbReference type="GeneID" id="24116002"/>
<dbReference type="KEGG" id="dac:Daci_4934"/>
<dbReference type="eggNOG" id="COG0164">
    <property type="taxonomic scope" value="Bacteria"/>
</dbReference>
<dbReference type="HOGENOM" id="CLU_036532_3_2_4"/>
<dbReference type="Proteomes" id="UP000000784">
    <property type="component" value="Chromosome"/>
</dbReference>
<dbReference type="GO" id="GO:0005737">
    <property type="term" value="C:cytoplasm"/>
    <property type="evidence" value="ECO:0007669"/>
    <property type="project" value="UniProtKB-SubCell"/>
</dbReference>
<dbReference type="GO" id="GO:0032299">
    <property type="term" value="C:ribonuclease H2 complex"/>
    <property type="evidence" value="ECO:0007669"/>
    <property type="project" value="TreeGrafter"/>
</dbReference>
<dbReference type="GO" id="GO:0030145">
    <property type="term" value="F:manganese ion binding"/>
    <property type="evidence" value="ECO:0007669"/>
    <property type="project" value="UniProtKB-UniRule"/>
</dbReference>
<dbReference type="GO" id="GO:0003723">
    <property type="term" value="F:RNA binding"/>
    <property type="evidence" value="ECO:0007669"/>
    <property type="project" value="InterPro"/>
</dbReference>
<dbReference type="GO" id="GO:0004523">
    <property type="term" value="F:RNA-DNA hybrid ribonuclease activity"/>
    <property type="evidence" value="ECO:0007669"/>
    <property type="project" value="UniProtKB-UniRule"/>
</dbReference>
<dbReference type="GO" id="GO:0043137">
    <property type="term" value="P:DNA replication, removal of RNA primer"/>
    <property type="evidence" value="ECO:0007669"/>
    <property type="project" value="TreeGrafter"/>
</dbReference>
<dbReference type="GO" id="GO:0006298">
    <property type="term" value="P:mismatch repair"/>
    <property type="evidence" value="ECO:0007669"/>
    <property type="project" value="TreeGrafter"/>
</dbReference>
<dbReference type="CDD" id="cd07182">
    <property type="entry name" value="RNase_HII_bacteria_HII_like"/>
    <property type="match status" value="1"/>
</dbReference>
<dbReference type="FunFam" id="3.30.420.10:FF:000006">
    <property type="entry name" value="Ribonuclease HII"/>
    <property type="match status" value="1"/>
</dbReference>
<dbReference type="Gene3D" id="3.30.420.10">
    <property type="entry name" value="Ribonuclease H-like superfamily/Ribonuclease H"/>
    <property type="match status" value="1"/>
</dbReference>
<dbReference type="HAMAP" id="MF_00052_B">
    <property type="entry name" value="RNase_HII_B"/>
    <property type="match status" value="1"/>
</dbReference>
<dbReference type="InterPro" id="IPR022898">
    <property type="entry name" value="RNase_HII"/>
</dbReference>
<dbReference type="InterPro" id="IPR001352">
    <property type="entry name" value="RNase_HII/HIII"/>
</dbReference>
<dbReference type="InterPro" id="IPR024567">
    <property type="entry name" value="RNase_HII/HIII_dom"/>
</dbReference>
<dbReference type="InterPro" id="IPR012337">
    <property type="entry name" value="RNaseH-like_sf"/>
</dbReference>
<dbReference type="InterPro" id="IPR036397">
    <property type="entry name" value="RNaseH_sf"/>
</dbReference>
<dbReference type="NCBIfam" id="NF000594">
    <property type="entry name" value="PRK00015.1-1"/>
    <property type="match status" value="1"/>
</dbReference>
<dbReference type="NCBIfam" id="NF000595">
    <property type="entry name" value="PRK00015.1-3"/>
    <property type="match status" value="1"/>
</dbReference>
<dbReference type="NCBIfam" id="NF000596">
    <property type="entry name" value="PRK00015.1-4"/>
    <property type="match status" value="1"/>
</dbReference>
<dbReference type="PANTHER" id="PTHR10954">
    <property type="entry name" value="RIBONUCLEASE H2 SUBUNIT A"/>
    <property type="match status" value="1"/>
</dbReference>
<dbReference type="PANTHER" id="PTHR10954:SF18">
    <property type="entry name" value="RIBONUCLEASE HII"/>
    <property type="match status" value="1"/>
</dbReference>
<dbReference type="Pfam" id="PF01351">
    <property type="entry name" value="RNase_HII"/>
    <property type="match status" value="1"/>
</dbReference>
<dbReference type="SUPFAM" id="SSF53098">
    <property type="entry name" value="Ribonuclease H-like"/>
    <property type="match status" value="1"/>
</dbReference>
<dbReference type="PROSITE" id="PS51975">
    <property type="entry name" value="RNASE_H_2"/>
    <property type="match status" value="1"/>
</dbReference>
<comment type="function">
    <text evidence="1">Endonuclease that specifically degrades the RNA of RNA-DNA hybrids.</text>
</comment>
<comment type="catalytic activity">
    <reaction evidence="1">
        <text>Endonucleolytic cleavage to 5'-phosphomonoester.</text>
        <dbReference type="EC" id="3.1.26.4"/>
    </reaction>
</comment>
<comment type="cofactor">
    <cofactor evidence="1">
        <name>Mn(2+)</name>
        <dbReference type="ChEBI" id="CHEBI:29035"/>
    </cofactor>
    <cofactor evidence="1">
        <name>Mg(2+)</name>
        <dbReference type="ChEBI" id="CHEBI:18420"/>
    </cofactor>
    <text evidence="1">Manganese or magnesium. Binds 1 divalent metal ion per monomer in the absence of substrate. May bind a second metal ion after substrate binding.</text>
</comment>
<comment type="subcellular location">
    <subcellularLocation>
        <location evidence="1">Cytoplasm</location>
    </subcellularLocation>
</comment>
<comment type="similarity">
    <text evidence="1">Belongs to the RNase HII family.</text>
</comment>
<gene>
    <name evidence="1" type="primary">rnhB</name>
    <name type="ordered locus">Daci_4934</name>
</gene>
<accession>A9BML8</accession>
<reference key="1">
    <citation type="submission" date="2007-11" db="EMBL/GenBank/DDBJ databases">
        <title>Complete sequence of Delftia acidovorans DSM 14801 / SPH-1.</title>
        <authorList>
            <person name="Copeland A."/>
            <person name="Lucas S."/>
            <person name="Lapidus A."/>
            <person name="Barry K."/>
            <person name="Glavina del Rio T."/>
            <person name="Dalin E."/>
            <person name="Tice H."/>
            <person name="Pitluck S."/>
            <person name="Lowry S."/>
            <person name="Clum A."/>
            <person name="Schmutz J."/>
            <person name="Larimer F."/>
            <person name="Land M."/>
            <person name="Hauser L."/>
            <person name="Kyrpides N."/>
            <person name="Kim E."/>
            <person name="Schleheck D."/>
            <person name="Richardson P."/>
        </authorList>
    </citation>
    <scope>NUCLEOTIDE SEQUENCE [LARGE SCALE GENOMIC DNA]</scope>
    <source>
        <strain>DSM 14801 / SPH-1</strain>
    </source>
</reference>
<name>RNH2_DELAS</name>